<name>PA23_BOTHY</name>
<organism>
    <name type="scientific">Bothrocophias hyoprora</name>
    <name type="common">Amazonian hognose viper</name>
    <name type="synonym">Porthidium hyoprora</name>
    <dbReference type="NCBI Taxonomy" id="230469"/>
    <lineage>
        <taxon>Eukaryota</taxon>
        <taxon>Metazoa</taxon>
        <taxon>Chordata</taxon>
        <taxon>Craniata</taxon>
        <taxon>Vertebrata</taxon>
        <taxon>Euteleostomi</taxon>
        <taxon>Lepidosauria</taxon>
        <taxon>Squamata</taxon>
        <taxon>Bifurcata</taxon>
        <taxon>Unidentata</taxon>
        <taxon>Episquamata</taxon>
        <taxon>Toxicofera</taxon>
        <taxon>Serpentes</taxon>
        <taxon>Colubroidea</taxon>
        <taxon>Viperidae</taxon>
        <taxon>Crotalinae</taxon>
        <taxon>Bothrocophias</taxon>
    </lineage>
</organism>
<feature type="chain" id="PRO_0000452839" description="Acidic phospholipase A2 PhTX-III" evidence="4">
    <location>
        <begin position="1"/>
        <end position="106"/>
    </location>
</feature>
<feature type="active site" evidence="3">
    <location>
        <position position="43"/>
    </location>
</feature>
<feature type="active site" evidence="3">
    <location>
        <position position="69"/>
    </location>
</feature>
<feature type="binding site" evidence="2">
    <location>
        <position position="23"/>
    </location>
    <ligand>
        <name>Ca(2+)</name>
        <dbReference type="ChEBI" id="CHEBI:29108"/>
    </ligand>
</feature>
<feature type="binding site" evidence="2">
    <location>
        <position position="25"/>
    </location>
    <ligand>
        <name>Ca(2+)</name>
        <dbReference type="ChEBI" id="CHEBI:29108"/>
    </ligand>
</feature>
<feature type="binding site" evidence="2">
    <location>
        <position position="27"/>
    </location>
    <ligand>
        <name>Ca(2+)</name>
        <dbReference type="ChEBI" id="CHEBI:29108"/>
    </ligand>
</feature>
<feature type="binding site" evidence="2">
    <location>
        <position position="44"/>
    </location>
    <ligand>
        <name>Ca(2+)</name>
        <dbReference type="ChEBI" id="CHEBI:29108"/>
    </ligand>
</feature>
<feature type="disulfide bond" evidence="2">
    <location>
        <begin position="24"/>
        <end position="40"/>
    </location>
</feature>
<feature type="disulfide bond" evidence="2">
    <location>
        <begin position="39"/>
        <end position="75"/>
    </location>
</feature>
<feature type="disulfide bond" evidence="2">
    <location>
        <begin position="45"/>
        <end position="106"/>
    </location>
</feature>
<feature type="disulfide bond" evidence="2">
    <location>
        <begin position="46"/>
        <end position="68"/>
    </location>
</feature>
<feature type="disulfide bond" evidence="2">
    <location>
        <begin position="55"/>
        <end position="66"/>
    </location>
</feature>
<feature type="non-consecutive residues" evidence="7">
    <location>
        <begin position="11"/>
        <end position="12"/>
    </location>
</feature>
<feature type="non-consecutive residues" evidence="7">
    <location>
        <begin position="49"/>
        <end position="50"/>
    </location>
</feature>
<dbReference type="EC" id="3.1.1.4" evidence="4"/>
<dbReference type="SMR" id="P0DUN0"/>
<dbReference type="GO" id="GO:0005576">
    <property type="term" value="C:extracellular region"/>
    <property type="evidence" value="ECO:0007669"/>
    <property type="project" value="UniProtKB-SubCell"/>
</dbReference>
<dbReference type="GO" id="GO:0005509">
    <property type="term" value="F:calcium ion binding"/>
    <property type="evidence" value="ECO:0007669"/>
    <property type="project" value="InterPro"/>
</dbReference>
<dbReference type="GO" id="GO:0047498">
    <property type="term" value="F:calcium-dependent phospholipase A2 activity"/>
    <property type="evidence" value="ECO:0007669"/>
    <property type="project" value="TreeGrafter"/>
</dbReference>
<dbReference type="GO" id="GO:0005543">
    <property type="term" value="F:phospholipid binding"/>
    <property type="evidence" value="ECO:0007669"/>
    <property type="project" value="TreeGrafter"/>
</dbReference>
<dbReference type="GO" id="GO:0050482">
    <property type="term" value="P:arachidonate secretion"/>
    <property type="evidence" value="ECO:0007669"/>
    <property type="project" value="InterPro"/>
</dbReference>
<dbReference type="GO" id="GO:0016042">
    <property type="term" value="P:lipid catabolic process"/>
    <property type="evidence" value="ECO:0007669"/>
    <property type="project" value="InterPro"/>
</dbReference>
<dbReference type="GO" id="GO:0042130">
    <property type="term" value="P:negative regulation of T cell proliferation"/>
    <property type="evidence" value="ECO:0007669"/>
    <property type="project" value="TreeGrafter"/>
</dbReference>
<dbReference type="GO" id="GO:0006644">
    <property type="term" value="P:phospholipid metabolic process"/>
    <property type="evidence" value="ECO:0007669"/>
    <property type="project" value="InterPro"/>
</dbReference>
<dbReference type="CDD" id="cd00125">
    <property type="entry name" value="PLA2c"/>
    <property type="match status" value="1"/>
</dbReference>
<dbReference type="Gene3D" id="1.20.90.10">
    <property type="entry name" value="Phospholipase A2 domain"/>
    <property type="match status" value="2"/>
</dbReference>
<dbReference type="InterPro" id="IPR001211">
    <property type="entry name" value="PLipase_A2"/>
</dbReference>
<dbReference type="InterPro" id="IPR033112">
    <property type="entry name" value="PLipase_A2_Asp_AS"/>
</dbReference>
<dbReference type="InterPro" id="IPR016090">
    <property type="entry name" value="PLipase_A2_dom"/>
</dbReference>
<dbReference type="InterPro" id="IPR036444">
    <property type="entry name" value="PLipase_A2_dom_sf"/>
</dbReference>
<dbReference type="InterPro" id="IPR033113">
    <property type="entry name" value="PLipase_A2_His_AS"/>
</dbReference>
<dbReference type="PANTHER" id="PTHR11716">
    <property type="entry name" value="PHOSPHOLIPASE A2 FAMILY MEMBER"/>
    <property type="match status" value="1"/>
</dbReference>
<dbReference type="PANTHER" id="PTHR11716:SF9">
    <property type="entry name" value="PHOSPHOLIPASE A2, MEMBRANE ASSOCIATED"/>
    <property type="match status" value="1"/>
</dbReference>
<dbReference type="Pfam" id="PF00068">
    <property type="entry name" value="Phospholip_A2_1"/>
    <property type="match status" value="1"/>
</dbReference>
<dbReference type="PRINTS" id="PR00389">
    <property type="entry name" value="PHPHLIPASEA2"/>
</dbReference>
<dbReference type="SMART" id="SM00085">
    <property type="entry name" value="PA2c"/>
    <property type="match status" value="1"/>
</dbReference>
<dbReference type="SUPFAM" id="SSF48619">
    <property type="entry name" value="Phospholipase A2, PLA2"/>
    <property type="match status" value="1"/>
</dbReference>
<dbReference type="PROSITE" id="PS00119">
    <property type="entry name" value="PA2_ASP"/>
    <property type="match status" value="1"/>
</dbReference>
<dbReference type="PROSITE" id="PS00118">
    <property type="entry name" value="PA2_HIS"/>
    <property type="match status" value="1"/>
</dbReference>
<protein>
    <recommendedName>
        <fullName evidence="5">Acidic phospholipase A2 PhTX-III</fullName>
        <shortName>svPLA2</shortName>
        <ecNumber evidence="4">3.1.1.4</ecNumber>
    </recommendedName>
    <alternativeName>
        <fullName>Phosphatidylcholine 2-acylhydrolase</fullName>
    </alternativeName>
</protein>
<sequence>DLMQFETLIMKSGVWYYGSYGCYCGSGGQFRPQDASDRCCFVHDCCYGKNGDIVCGGDDPCKKQICECDRVAATCFRDNKVTYDNKYWFFPAKFPPQNCKEESEPC</sequence>
<keyword id="KW-0106">Calcium</keyword>
<keyword id="KW-0903">Direct protein sequencing</keyword>
<keyword id="KW-1015">Disulfide bond</keyword>
<keyword id="KW-0378">Hydrolase</keyword>
<keyword id="KW-0479">Metal-binding</keyword>
<keyword id="KW-0964">Secreted</keyword>
<evidence type="ECO:0000250" key="1"/>
<evidence type="ECO:0000250" key="2">
    <source>
        <dbReference type="UniProtKB" id="O42191"/>
    </source>
</evidence>
<evidence type="ECO:0000250" key="3">
    <source>
        <dbReference type="UniProtKB" id="P06859"/>
    </source>
</evidence>
<evidence type="ECO:0000269" key="4">
    <source>
    </source>
</evidence>
<evidence type="ECO:0000303" key="5">
    <source>
    </source>
</evidence>
<evidence type="ECO:0000305" key="6"/>
<evidence type="ECO:0000305" key="7">
    <source>
    </source>
</evidence>
<comment type="function">
    <text evidence="4">Snake venom phospholipase A2 (PLA2) that induces inflammatory response, with local edema and release of cytokines IL-1 alpha, IL-6 and TNF-alpha (PubMed:29124136). Does not exhibit myotoxic, anticoagulant and antibacterial effects (PubMed:29124136). Release of pro-inflammatory cytokines may be due to mast cell degranulation, and edema may be induced by arachidonic acid that results from the PLA2 catalytic activity (PubMed:29124136). PLA2 catalyzes the calcium-dependent hydrolysis of the 2-acyl groups in 3-sn-phosphoglycerides (PubMed:29124136).</text>
</comment>
<comment type="catalytic activity">
    <reaction evidence="4">
        <text>a 1,2-diacyl-sn-glycero-3-phosphocholine + H2O = a 1-acyl-sn-glycero-3-phosphocholine + a fatty acid + H(+)</text>
        <dbReference type="Rhea" id="RHEA:15801"/>
        <dbReference type="ChEBI" id="CHEBI:15377"/>
        <dbReference type="ChEBI" id="CHEBI:15378"/>
        <dbReference type="ChEBI" id="CHEBI:28868"/>
        <dbReference type="ChEBI" id="CHEBI:57643"/>
        <dbReference type="ChEBI" id="CHEBI:58168"/>
        <dbReference type="EC" id="3.1.1.4"/>
    </reaction>
</comment>
<comment type="cofactor">
    <cofactor evidence="4">
        <name>Ca(2+)</name>
        <dbReference type="ChEBI" id="CHEBI:29108"/>
    </cofactor>
    <text evidence="1">Binds 1 Ca(2+) ion.</text>
</comment>
<comment type="activity regulation">
    <text evidence="4">Partially inhibited by magnesium ions and completely inhibited by zinc ions These divalent cations may act as competitive antagonists of the cofactor.</text>
</comment>
<comment type="biophysicochemical properties">
    <kinetics>
        <KM evidence="4">4.43 mM for 4-nitro-3-(octanoyloxy) benzoic acid (NOBA)</KM>
    </kinetics>
    <phDependence>
        <text evidence="4">Optimum pH is 8.0.</text>
    </phDependence>
    <temperatureDependence>
        <text evidence="4">Optimum temperature is 37 degrees Celsius.</text>
    </temperatureDependence>
</comment>
<comment type="subcellular location">
    <subcellularLocation>
        <location evidence="4">Secreted</location>
    </subcellularLocation>
</comment>
<comment type="tissue specificity">
    <text evidence="7">Expressed by the venom gland.</text>
</comment>
<comment type="mass spectrometry"/>
<comment type="similarity">
    <text evidence="6">Belongs to the phospholipase A2 family. Group II subfamily. D49 sub-subfamily.</text>
</comment>
<proteinExistence type="evidence at protein level"/>
<accession>P0DUN0</accession>
<reference key="1">
    <citation type="journal article" date="2015" name="Biochem. Biophys. Rep.">
        <title>Novel acidic phospholipase A2 from Porthidium hyoprora causes inflammation with mast cell rich infiltrate.</title>
        <authorList>
            <person name="Marques P.P."/>
            <person name="Esteves A."/>
            <person name="Lancellotti M."/>
            <person name="Ponce-Soto L.A."/>
            <person name="Marangoni S."/>
        </authorList>
    </citation>
    <scope>PROTEIN SEQUENCE</scope>
    <scope>FUNCTION</scope>
    <scope>CATALYTIC ACTIVITY</scope>
    <scope>MASS SPECTROMETRY</scope>
    <scope>BIOPHYSICOCHEMICAL PROPERTIES</scope>
    <scope>SUBCELLULAR LOCATION</scope>
    <source>
        <tissue>Venom</tissue>
    </source>
</reference>